<protein>
    <recommendedName>
        <fullName evidence="1">Chromosomal replication initiator protein DnaA</fullName>
    </recommendedName>
</protein>
<gene>
    <name evidence="1" type="primary">dnaA</name>
    <name type="ordered locus">FTW_0001</name>
</gene>
<sequence>MTTWDKCLKKIKKNLSTFEYKTWIKPIHVEQNSNLFTVYCNNEYFKKHIKSKYGNLILSTIQECHGNDLIIEYSNKKFSGEKITEVITAGPQANFFSTTSVEIKDESEDTKVVQEPKISKKSNSKDFSSSQELFGFDEAMLITAKEDEEYSFGLPLKEKYVFDSFVVGDANKIARAAAMQVSINPGKLHNPLFIYGGSGLGKTHLMQAIGNHAREVNPNAKIIYTNSEQFIKDYVNSIRLQDQDEFQRVYRSADILLIDDIQFIAGKEGTAQEFFHTFNALYENGKQIILTSDKYPNEIEGLEERLVSRFGYGLTVSVDMPDLETRIAILLKKAHDLGQKLPNETAAFIAENVRTNVRELEGALNRVLTTSKFNHKDPTIEVAQACLRDVIKIQEKKVKIDNIQKVVADFYRIRVKDLTSNQRSRNIARPRQIAMSLARELTSHSLPEIGNAFGGRDHTTVMHAVKAITKLRQSNTSISDDYELLLNKISR</sequence>
<evidence type="ECO:0000255" key="1">
    <source>
        <dbReference type="HAMAP-Rule" id="MF_00377"/>
    </source>
</evidence>
<name>DNAA_FRATW</name>
<reference key="1">
    <citation type="journal article" date="2007" name="PLoS ONE">
        <title>Complete genomic characterization of a pathogenic A.II strain of Francisella tularensis subspecies tularensis.</title>
        <authorList>
            <person name="Beckstrom-Sternberg S.M."/>
            <person name="Auerbach R.K."/>
            <person name="Godbole S."/>
            <person name="Pearson J.V."/>
            <person name="Beckstrom-Sternberg J.S."/>
            <person name="Deng Z."/>
            <person name="Munk C."/>
            <person name="Kubota K."/>
            <person name="Zhou Y."/>
            <person name="Bruce D."/>
            <person name="Noronha J."/>
            <person name="Scheuermann R.H."/>
            <person name="Wang A."/>
            <person name="Wei X."/>
            <person name="Wang J."/>
            <person name="Hao J."/>
            <person name="Wagner D.M."/>
            <person name="Brettin T.S."/>
            <person name="Brown N."/>
            <person name="Gilna P."/>
            <person name="Keim P.S."/>
        </authorList>
    </citation>
    <scope>NUCLEOTIDE SEQUENCE [LARGE SCALE GENOMIC DNA]</scope>
    <source>
        <strain>WY96-3418</strain>
    </source>
</reference>
<proteinExistence type="inferred from homology"/>
<feature type="chain" id="PRO_1000048648" description="Chromosomal replication initiator protein DnaA">
    <location>
        <begin position="1"/>
        <end position="491"/>
    </location>
</feature>
<feature type="region of interest" description="Domain I, interacts with DnaA modulators" evidence="1">
    <location>
        <begin position="1"/>
        <end position="69"/>
    </location>
</feature>
<feature type="region of interest" description="Domain II" evidence="1">
    <location>
        <begin position="69"/>
        <end position="154"/>
    </location>
</feature>
<feature type="region of interest" description="Domain III, AAA+ region" evidence="1">
    <location>
        <begin position="155"/>
        <end position="371"/>
    </location>
</feature>
<feature type="region of interest" description="Domain IV, binds dsDNA" evidence="1">
    <location>
        <begin position="372"/>
        <end position="491"/>
    </location>
</feature>
<feature type="binding site" evidence="1">
    <location>
        <position position="199"/>
    </location>
    <ligand>
        <name>ATP</name>
        <dbReference type="ChEBI" id="CHEBI:30616"/>
    </ligand>
</feature>
<feature type="binding site" evidence="1">
    <location>
        <position position="201"/>
    </location>
    <ligand>
        <name>ATP</name>
        <dbReference type="ChEBI" id="CHEBI:30616"/>
    </ligand>
</feature>
<feature type="binding site" evidence="1">
    <location>
        <position position="202"/>
    </location>
    <ligand>
        <name>ATP</name>
        <dbReference type="ChEBI" id="CHEBI:30616"/>
    </ligand>
</feature>
<feature type="binding site" evidence="1">
    <location>
        <position position="203"/>
    </location>
    <ligand>
        <name>ATP</name>
        <dbReference type="ChEBI" id="CHEBI:30616"/>
    </ligand>
</feature>
<organism>
    <name type="scientific">Francisella tularensis subsp. tularensis (strain WY96-3418)</name>
    <dbReference type="NCBI Taxonomy" id="418136"/>
    <lineage>
        <taxon>Bacteria</taxon>
        <taxon>Pseudomonadati</taxon>
        <taxon>Pseudomonadota</taxon>
        <taxon>Gammaproteobacteria</taxon>
        <taxon>Thiotrichales</taxon>
        <taxon>Francisellaceae</taxon>
        <taxon>Francisella</taxon>
    </lineage>
</organism>
<keyword id="KW-0067">ATP-binding</keyword>
<keyword id="KW-0963">Cytoplasm</keyword>
<keyword id="KW-0235">DNA replication</keyword>
<keyword id="KW-0238">DNA-binding</keyword>
<keyword id="KW-0446">Lipid-binding</keyword>
<keyword id="KW-0547">Nucleotide-binding</keyword>
<comment type="function">
    <text evidence="1">Plays an essential role in the initiation and regulation of chromosomal replication. ATP-DnaA binds to the origin of replication (oriC) to initiate formation of the DNA replication initiation complex once per cell cycle. Binds the DnaA box (a 9 base pair repeat at the origin) and separates the double-stranded (ds)DNA. Forms a right-handed helical filament on oriC DNA; dsDNA binds to the exterior of the filament while single-stranded (ss)DNA is stabiized in the filament's interior. The ATP-DnaA-oriC complex binds and stabilizes one strand of the AT-rich DNA unwinding element (DUE), permitting loading of DNA polymerase. After initiation quickly degrades to an ADP-DnaA complex that is not apt for DNA replication. Binds acidic phospholipids.</text>
</comment>
<comment type="subunit">
    <text evidence="1">Oligomerizes as a right-handed, spiral filament on DNA at oriC.</text>
</comment>
<comment type="subcellular location">
    <subcellularLocation>
        <location evidence="1">Cytoplasm</location>
    </subcellularLocation>
</comment>
<comment type="domain">
    <text evidence="1">Domain I is involved in oligomerization and binding regulators, domain II is flexibile and of varying length in different bacteria, domain III forms the AAA+ region, while domain IV binds dsDNA.</text>
</comment>
<comment type="similarity">
    <text evidence="1">Belongs to the DnaA family.</text>
</comment>
<dbReference type="EMBL" id="CP000608">
    <property type="protein sequence ID" value="ABO46018.1"/>
    <property type="molecule type" value="Genomic_DNA"/>
</dbReference>
<dbReference type="RefSeq" id="WP_003027676.1">
    <property type="nucleotide sequence ID" value="NC_009257.1"/>
</dbReference>
<dbReference type="SMR" id="A4IVR6"/>
<dbReference type="KEGG" id="ftw:FTW_0001"/>
<dbReference type="HOGENOM" id="CLU_026910_3_1_6"/>
<dbReference type="GO" id="GO:0005737">
    <property type="term" value="C:cytoplasm"/>
    <property type="evidence" value="ECO:0007669"/>
    <property type="project" value="UniProtKB-SubCell"/>
</dbReference>
<dbReference type="GO" id="GO:0005886">
    <property type="term" value="C:plasma membrane"/>
    <property type="evidence" value="ECO:0007669"/>
    <property type="project" value="TreeGrafter"/>
</dbReference>
<dbReference type="GO" id="GO:0005524">
    <property type="term" value="F:ATP binding"/>
    <property type="evidence" value="ECO:0007669"/>
    <property type="project" value="UniProtKB-UniRule"/>
</dbReference>
<dbReference type="GO" id="GO:0016887">
    <property type="term" value="F:ATP hydrolysis activity"/>
    <property type="evidence" value="ECO:0007669"/>
    <property type="project" value="InterPro"/>
</dbReference>
<dbReference type="GO" id="GO:0003688">
    <property type="term" value="F:DNA replication origin binding"/>
    <property type="evidence" value="ECO:0007669"/>
    <property type="project" value="UniProtKB-UniRule"/>
</dbReference>
<dbReference type="GO" id="GO:0008289">
    <property type="term" value="F:lipid binding"/>
    <property type="evidence" value="ECO:0007669"/>
    <property type="project" value="UniProtKB-KW"/>
</dbReference>
<dbReference type="GO" id="GO:0006270">
    <property type="term" value="P:DNA replication initiation"/>
    <property type="evidence" value="ECO:0007669"/>
    <property type="project" value="UniProtKB-UniRule"/>
</dbReference>
<dbReference type="GO" id="GO:0006275">
    <property type="term" value="P:regulation of DNA replication"/>
    <property type="evidence" value="ECO:0007669"/>
    <property type="project" value="UniProtKB-UniRule"/>
</dbReference>
<dbReference type="CDD" id="cd00009">
    <property type="entry name" value="AAA"/>
    <property type="match status" value="1"/>
</dbReference>
<dbReference type="CDD" id="cd06571">
    <property type="entry name" value="Bac_DnaA_C"/>
    <property type="match status" value="1"/>
</dbReference>
<dbReference type="FunFam" id="3.40.50.300:FF:000668">
    <property type="entry name" value="Chromosomal replication initiator protein DnaA"/>
    <property type="match status" value="1"/>
</dbReference>
<dbReference type="Gene3D" id="1.10.1750.10">
    <property type="match status" value="1"/>
</dbReference>
<dbReference type="Gene3D" id="1.10.8.60">
    <property type="match status" value="1"/>
</dbReference>
<dbReference type="Gene3D" id="3.30.300.180">
    <property type="match status" value="1"/>
</dbReference>
<dbReference type="Gene3D" id="3.40.50.300">
    <property type="entry name" value="P-loop containing nucleotide triphosphate hydrolases"/>
    <property type="match status" value="1"/>
</dbReference>
<dbReference type="HAMAP" id="MF_00377">
    <property type="entry name" value="DnaA_bact"/>
    <property type="match status" value="1"/>
</dbReference>
<dbReference type="InterPro" id="IPR003593">
    <property type="entry name" value="AAA+_ATPase"/>
</dbReference>
<dbReference type="InterPro" id="IPR001957">
    <property type="entry name" value="Chromosome_initiator_DnaA"/>
</dbReference>
<dbReference type="InterPro" id="IPR020591">
    <property type="entry name" value="Chromosome_initiator_DnaA-like"/>
</dbReference>
<dbReference type="InterPro" id="IPR018312">
    <property type="entry name" value="Chromosome_initiator_DnaA_CS"/>
</dbReference>
<dbReference type="InterPro" id="IPR013159">
    <property type="entry name" value="DnaA_C"/>
</dbReference>
<dbReference type="InterPro" id="IPR013317">
    <property type="entry name" value="DnaA_dom"/>
</dbReference>
<dbReference type="InterPro" id="IPR024633">
    <property type="entry name" value="DnaA_N_dom"/>
</dbReference>
<dbReference type="InterPro" id="IPR038454">
    <property type="entry name" value="DnaA_N_sf"/>
</dbReference>
<dbReference type="InterPro" id="IPR027417">
    <property type="entry name" value="P-loop_NTPase"/>
</dbReference>
<dbReference type="InterPro" id="IPR010921">
    <property type="entry name" value="Trp_repressor/repl_initiator"/>
</dbReference>
<dbReference type="NCBIfam" id="TIGR00362">
    <property type="entry name" value="DnaA"/>
    <property type="match status" value="1"/>
</dbReference>
<dbReference type="PANTHER" id="PTHR30050">
    <property type="entry name" value="CHROMOSOMAL REPLICATION INITIATOR PROTEIN DNAA"/>
    <property type="match status" value="1"/>
</dbReference>
<dbReference type="PANTHER" id="PTHR30050:SF2">
    <property type="entry name" value="CHROMOSOMAL REPLICATION INITIATOR PROTEIN DNAA"/>
    <property type="match status" value="1"/>
</dbReference>
<dbReference type="Pfam" id="PF00308">
    <property type="entry name" value="Bac_DnaA"/>
    <property type="match status" value="1"/>
</dbReference>
<dbReference type="Pfam" id="PF08299">
    <property type="entry name" value="Bac_DnaA_C"/>
    <property type="match status" value="1"/>
</dbReference>
<dbReference type="Pfam" id="PF11638">
    <property type="entry name" value="DnaA_N"/>
    <property type="match status" value="1"/>
</dbReference>
<dbReference type="PRINTS" id="PR00051">
    <property type="entry name" value="DNAA"/>
</dbReference>
<dbReference type="SMART" id="SM00382">
    <property type="entry name" value="AAA"/>
    <property type="match status" value="1"/>
</dbReference>
<dbReference type="SMART" id="SM00760">
    <property type="entry name" value="Bac_DnaA_C"/>
    <property type="match status" value="1"/>
</dbReference>
<dbReference type="SUPFAM" id="SSF52540">
    <property type="entry name" value="P-loop containing nucleoside triphosphate hydrolases"/>
    <property type="match status" value="1"/>
</dbReference>
<dbReference type="SUPFAM" id="SSF48295">
    <property type="entry name" value="TrpR-like"/>
    <property type="match status" value="1"/>
</dbReference>
<dbReference type="PROSITE" id="PS01008">
    <property type="entry name" value="DNAA"/>
    <property type="match status" value="1"/>
</dbReference>
<accession>A4IVR6</accession>